<sequence>MKVEPLWSLDVGTQPVYSLVRTPDGTKMYAATGKTVVTFGPGPEITRQTSTQHPLVTCLAISPDGHMVVSMGTDGAVMFNDSTGAALFKYSHQNEVQAAAFSPDGSLFVSAAIGDVGIYHCRDVKTKVMKQSFKGTPRAIAWAPGSDWFVISTQDGDLVIMTPEGMELNSCNLGAPAWALKVVQCSSFLVQPNTALDVDIANSSDDEFTIPQTVTPSASASGRSGSGKRHKVELDREEFITSHNMDNFRILVASWDMRYRVINPSVYADGACIAKMTDGGSDSRSRSSSRRRLDGLLVAVSEIPFIPLCMEIIGNYVFLSGVGGSVVVLNSSNGRVLSSLYQVWESDPFISKAPLIPTESQSKHLPQKRTIMGQVTTCTDVNQRLMELRKREAMANRNVKNVTNPLAFHGMHTIWCYSMIHVEPSSLILGLSNGVLLCLSLRYAMIHSQYGSLYAYRRGLMSVSVMNLSTGRESILEVGMHVENLSIYESTLAIKTSSRLLLYRLQDPALKKRNIESVMDYYSSSTNGLIETDRSRRQNMSSLSYSFETSIKKRFVCSQLIVSNNHFFLCNVSHISVHDFSGKQTDRWTFKQLKCTYVRSIGGIPSNEAVLVGFDTGKVCIFKIGNKFPIELLLHRSPIVSLDISPDRKYISVVDRSDVVSVYKFLDDSEIVLGATNMAVVEHENTPTSYSRIAALAHVSLDGNLPGITTGQDYSVPLYTFKGTTSAIWDLVLPGVLARSTQKSVDICIDSGVSYTFQLSYPGSFVLCQNGNRAFIFNVSYLGQSLVNLDYSSLIEMVEVPMMPMVIYRTHKVLRMLLDSNYEAGAVFPSQAANYELNEAIKAANLGVPMDCWRDLAIAALLSNELDLAREVLATIGDIRSLKAIAEITRQTSTKTYLLLSALALSMCDHFSEASLLFAASDDIQMATELLFFINRECIPYNSPNSSLISSIAKKLICRELHSSLTGTEEKILEVLKTQGDSTYSPLGTQTAPEAKETNTALLTDFSDKLLAKGRATVNKFLSAIESGSSKADGPGNDNKDTYNYFNDYRILLRRQISSFAKTESERANLVVRHSKFLETSLEWRAAAASYLDMDDPESAIDVLITSKQTGALLRLVRIFPPVARELNHKAPSFNDFESPEDADEYAPSSVQNQMLKRAYRKALVYFEKSNDYSNAIFIAQRLGDPLVLLRLLIQQGSWSQVEALGKAYPEMMPSIHEAKASMLLREGRFIEALERLRLSGNTSKEAIIIKQLIDASIAECKFNLTRALTGQLAKQIAKTRAFAALSVSSMEYYAAIKAIRARVLVYTGYQQVMEYMVNILRSRDLSDITMIRLHDNTQSAKVVTAGIFLTSYAAMANELTNADSVFSEELENNTGILSGEDTVKASSQRSKKDNPPSLRSTIGFITSSTTPQLGSLAHIDLGINNMNIPPGISELIIWVCLALASRRTYPEVEARALKRILASRIPGPMIGYFRRQMLLVKGTPAKDFSHGESSDAESRDACPRCAAPLKALPPSRPVGAQDMAILSSLPHCCPVFSDICKNCGSPIVRSALSLKILPLVLAEPDDETSIAVALERAAAVEMDIEALMGETNRLEIGTDDLQTDEGVVDVLRRASIAGDGRGAVLTSEQFEKISPANIFIVDDTWSNPSLLPRFVVGNVIKRFFIRTISDFQLHYCTGCGFFFDGIEYEEYVIVTGSCPICGATNIVL</sequence>
<gene>
    <name evidence="7" type="ORF">GL50803_0016547</name>
    <name evidence="6" type="ORF">GL50803_16547</name>
</gene>
<keyword id="KW-0966">Cell projection</keyword>
<keyword id="KW-0969">Cilium</keyword>
<keyword id="KW-0970">Cilium biogenesis/degradation</keyword>
<keyword id="KW-0963">Cytoplasm</keyword>
<keyword id="KW-0206">Cytoskeleton</keyword>
<keyword id="KW-0282">Flagellum</keyword>
<keyword id="KW-0433">Leucine-rich repeat</keyword>
<keyword id="KW-1185">Reference proteome</keyword>
<keyword id="KW-0677">Repeat</keyword>
<keyword id="KW-0853">WD repeat</keyword>
<evidence type="ECO:0000255" key="1"/>
<evidence type="ECO:0000256" key="2">
    <source>
        <dbReference type="SAM" id="MobiDB-lite"/>
    </source>
</evidence>
<evidence type="ECO:0000269" key="3">
    <source>
    </source>
</evidence>
<evidence type="ECO:0000303" key="4">
    <source>
    </source>
</evidence>
<evidence type="ECO:0000305" key="5">
    <source>
    </source>
</evidence>
<evidence type="ECO:0000312" key="6">
    <source>
        <dbReference type="EMBL" id="EDO79048.1"/>
    </source>
</evidence>
<evidence type="ECO:0000312" key="7">
    <source>
        <dbReference type="EMBL" id="KAE8304889.1"/>
    </source>
</evidence>
<evidence type="ECO:0000312" key="8">
    <source>
        <dbReference type="Proteomes" id="UP000001548"/>
    </source>
</evidence>
<proteinExistence type="predicted"/>
<organism evidence="6">
    <name type="scientific">Giardia intestinalis (strain ATCC 50803 / WB clone C6)</name>
    <name type="common">Giardia lamblia</name>
    <dbReference type="NCBI Taxonomy" id="184922"/>
    <lineage>
        <taxon>Eukaryota</taxon>
        <taxon>Metamonada</taxon>
        <taxon>Diplomonadida</taxon>
        <taxon>Hexamitidae</taxon>
        <taxon>Giardiinae</taxon>
        <taxon>Giardia</taxon>
    </lineage>
</organism>
<feature type="chain" id="PRO_0000459356" description="Intraflagellar transport protein 122">
    <location>
        <begin position="1"/>
        <end position="1709"/>
    </location>
</feature>
<feature type="repeat" description="WD 1" evidence="1">
    <location>
        <begin position="51"/>
        <end position="89"/>
    </location>
</feature>
<feature type="repeat" description="WD 2" evidence="1">
    <location>
        <begin position="132"/>
        <end position="171"/>
    </location>
</feature>
<feature type="repeat" description="WD 3" evidence="1">
    <location>
        <begin position="634"/>
        <end position="673"/>
    </location>
</feature>
<feature type="repeat" description="LRR 1" evidence="1">
    <location>
        <begin position="1231"/>
        <end position="1256"/>
    </location>
</feature>
<feature type="repeat" description="LRR 2" evidence="1">
    <location>
        <begin position="1414"/>
        <end position="1436"/>
    </location>
</feature>
<feature type="region of interest" description="Disordered" evidence="2">
    <location>
        <begin position="209"/>
        <end position="229"/>
    </location>
</feature>
<feature type="region of interest" description="Disordered" evidence="2">
    <location>
        <begin position="1378"/>
        <end position="1404"/>
    </location>
</feature>
<reference evidence="6 8" key="1">
    <citation type="journal article" date="2007" name="Science">
        <title>Genomic minimalism in the early diverging intestinal parasite Giardia lamblia.</title>
        <authorList>
            <person name="Morrison H.G."/>
            <person name="McArthur A.G."/>
            <person name="Gillin F.D."/>
            <person name="Aley S.B."/>
            <person name="Adam R.D."/>
            <person name="Olsen G.J."/>
            <person name="Best A.A."/>
            <person name="Cande W.Z."/>
            <person name="Chen F."/>
            <person name="Cipriano M.J."/>
            <person name="Davids B.J."/>
            <person name="Dawson S.C."/>
            <person name="Elmendorf H.G."/>
            <person name="Hehl A.B."/>
            <person name="Holder M.E."/>
            <person name="Huse S.M."/>
            <person name="Kim U.U."/>
            <person name="Lasek-Nesselquist E."/>
            <person name="Manning G."/>
            <person name="Nigam A."/>
            <person name="Nixon J.E.J."/>
            <person name="Palm D."/>
            <person name="Passamaneck N.E."/>
            <person name="Prabhu A."/>
            <person name="Reich C.I."/>
            <person name="Reiner D.S."/>
            <person name="Samuelson J."/>
            <person name="Svard S.G."/>
            <person name="Sogin M.L."/>
        </authorList>
    </citation>
    <scope>NUCLEOTIDE SEQUENCE [LARGE SCALE GENOMIC DNA]</scope>
    <source>
        <strain evidence="8">ATCC 50803 / WB clone C6</strain>
    </source>
</reference>
<reference evidence="7" key="2">
    <citation type="submission" date="2019-07" db="EMBL/GenBank/DDBJ databases">
        <title>New Giardia intestinalis WB genome in near-complete chromosomes.</title>
        <authorList>
            <person name="Xu F."/>
            <person name="Jex A."/>
            <person name="Svard S.G."/>
        </authorList>
    </citation>
    <scope>NUCLEOTIDE SEQUENCE [LARGE SCALE GENOMIC DNA]</scope>
    <source>
        <strain evidence="7">ATCC 50803 / WB clone C6</strain>
    </source>
</reference>
<reference key="3">
    <citation type="journal article" date="2019" name="Elife">
        <title>Length-dependent disassembly maintains four different flagellar lengths in Giardia.</title>
        <authorList>
            <person name="McInally S.G."/>
            <person name="Kondev J."/>
            <person name="Dawson S.C."/>
        </authorList>
    </citation>
    <scope>FUNCTION</scope>
    <scope>SUBCELLULAR LOCATION</scope>
    <source>
        <strain evidence="4">ATCC 50803 / WB clone C6</strain>
    </source>
</reference>
<name>IF122_GIAIC</name>
<accession>A8BJ15</accession>
<protein>
    <recommendedName>
        <fullName evidence="4">Intraflagellar transport protein 122</fullName>
        <shortName evidence="4">IFT122</shortName>
    </recommendedName>
    <alternativeName>
        <fullName evidence="6">IFT complex A</fullName>
    </alternativeName>
    <alternativeName>
        <fullName evidence="7">Intraflagellar transport protein IFT122</fullName>
    </alternativeName>
</protein>
<dbReference type="EMBL" id="AACB02000020">
    <property type="protein sequence ID" value="EDO79048.1"/>
    <property type="molecule type" value="Genomic_DNA"/>
</dbReference>
<dbReference type="EMBL" id="AACB03000001">
    <property type="protein sequence ID" value="KAE8304889.1"/>
    <property type="molecule type" value="Genomic_DNA"/>
</dbReference>
<dbReference type="RefSeq" id="XP_001706722.1">
    <property type="nucleotide sequence ID" value="XM_001706670.1"/>
</dbReference>
<dbReference type="STRING" id="184922.A8BJ15"/>
<dbReference type="EnsemblProtists" id="EDO79048">
    <property type="protein sequence ID" value="EDO79048"/>
    <property type="gene ID" value="GL50803_16547"/>
</dbReference>
<dbReference type="GeneID" id="5699616"/>
<dbReference type="KEGG" id="gla:GL50803_0016547"/>
<dbReference type="VEuPathDB" id="GiardiaDB:GL50803_16547"/>
<dbReference type="HOGENOM" id="CLU_240642_0_0_1"/>
<dbReference type="OMA" id="ICCAWSA"/>
<dbReference type="Proteomes" id="UP000001548">
    <property type="component" value="Chromosome 5"/>
</dbReference>
<dbReference type="GO" id="GO:0097729">
    <property type="term" value="C:9+2 motile cilium"/>
    <property type="evidence" value="ECO:0000314"/>
    <property type="project" value="UniProtKB"/>
</dbReference>
<dbReference type="GO" id="GO:0005930">
    <property type="term" value="C:axoneme"/>
    <property type="evidence" value="ECO:0000314"/>
    <property type="project" value="UniProtKB"/>
</dbReference>
<dbReference type="GO" id="GO:0036064">
    <property type="term" value="C:ciliary basal body"/>
    <property type="evidence" value="ECO:0000314"/>
    <property type="project" value="UniProtKB"/>
</dbReference>
<dbReference type="GO" id="GO:1990900">
    <property type="term" value="C:ciliary pocket collar"/>
    <property type="evidence" value="ECO:0000314"/>
    <property type="project" value="UniProtKB"/>
</dbReference>
<dbReference type="GO" id="GO:0097542">
    <property type="term" value="C:ciliary tip"/>
    <property type="evidence" value="ECO:0000314"/>
    <property type="project" value="UniProtKB"/>
</dbReference>
<dbReference type="GO" id="GO:0030991">
    <property type="term" value="C:intraciliary transport particle A"/>
    <property type="evidence" value="ECO:0000318"/>
    <property type="project" value="GO_Central"/>
</dbReference>
<dbReference type="GO" id="GO:0097730">
    <property type="term" value="C:non-motile cilium"/>
    <property type="evidence" value="ECO:0000318"/>
    <property type="project" value="GO_Central"/>
</dbReference>
<dbReference type="GO" id="GO:0035720">
    <property type="term" value="P:intraciliary anterograde transport"/>
    <property type="evidence" value="ECO:0000305"/>
    <property type="project" value="UniProtKB"/>
</dbReference>
<dbReference type="GO" id="GO:0035721">
    <property type="term" value="P:intraciliary retrograde transport"/>
    <property type="evidence" value="ECO:0000318"/>
    <property type="project" value="GO_Central"/>
</dbReference>
<dbReference type="GO" id="GO:0035735">
    <property type="term" value="P:intraciliary transport involved in cilium assembly"/>
    <property type="evidence" value="ECO:0000305"/>
    <property type="project" value="UniProtKB"/>
</dbReference>
<dbReference type="GO" id="GO:1905515">
    <property type="term" value="P:non-motile cilium assembly"/>
    <property type="evidence" value="ECO:0000318"/>
    <property type="project" value="GO_Central"/>
</dbReference>
<dbReference type="GO" id="GO:0061512">
    <property type="term" value="P:protein localization to cilium"/>
    <property type="evidence" value="ECO:0000318"/>
    <property type="project" value="GO_Central"/>
</dbReference>
<dbReference type="FunFam" id="2.130.10.10:FF:001764">
    <property type="entry name" value="Putative WD-repeat family protein"/>
    <property type="match status" value="1"/>
</dbReference>
<dbReference type="Gene3D" id="2.130.10.10">
    <property type="entry name" value="YVTN repeat-like/Quinoprotein amine dehydrogenase"/>
    <property type="match status" value="2"/>
</dbReference>
<dbReference type="InterPro" id="IPR056152">
    <property type="entry name" value="Beta-prop_IFT122_2nd"/>
</dbReference>
<dbReference type="InterPro" id="IPR039857">
    <property type="entry name" value="Ift122/121"/>
</dbReference>
<dbReference type="InterPro" id="IPR015943">
    <property type="entry name" value="WD40/YVTN_repeat-like_dom_sf"/>
</dbReference>
<dbReference type="InterPro" id="IPR036322">
    <property type="entry name" value="WD40_repeat_dom_sf"/>
</dbReference>
<dbReference type="InterPro" id="IPR001680">
    <property type="entry name" value="WD40_rpt"/>
</dbReference>
<dbReference type="PANTHER" id="PTHR12764:SF4">
    <property type="entry name" value="INTRAFLAGELLAR TRANSPORT PROTEIN 122 HOMOLOG"/>
    <property type="match status" value="1"/>
</dbReference>
<dbReference type="PANTHER" id="PTHR12764">
    <property type="entry name" value="WD REPEAT DOMAIN-RELATED"/>
    <property type="match status" value="1"/>
</dbReference>
<dbReference type="Pfam" id="PF23377">
    <property type="entry name" value="Beta-prop_IFT122_2nd"/>
    <property type="match status" value="2"/>
</dbReference>
<dbReference type="Pfam" id="PF00400">
    <property type="entry name" value="WD40"/>
    <property type="match status" value="1"/>
</dbReference>
<dbReference type="SMART" id="SM00320">
    <property type="entry name" value="WD40"/>
    <property type="match status" value="5"/>
</dbReference>
<dbReference type="SUPFAM" id="SSF50978">
    <property type="entry name" value="WD40 repeat-like"/>
    <property type="match status" value="1"/>
</dbReference>
<comment type="function">
    <text evidence="5">Component of the intraflagellar transport complex A (IFT-A) involved in flagellar assembly (Probable).</text>
</comment>
<comment type="subcellular location">
    <subcellularLocation>
        <location evidence="3">Cell projection</location>
        <location evidence="3">Cilium</location>
        <location evidence="3">Flagellum</location>
    </subcellularLocation>
    <subcellularLocation>
        <location evidence="3">Cytoplasm</location>
        <location evidence="3">Cytoskeleton</location>
        <location evidence="3">Flagellum axoneme</location>
    </subcellularLocation>
    <subcellularLocation>
        <location evidence="3">Cytoplasm</location>
        <location evidence="3">Cytoskeleton</location>
        <location evidence="3">Flagellum basal body</location>
    </subcellularLocation>
    <text evidence="3">Localizes to the cytoplasmic and membrane-bound portions of each of the eight axonemes, localizing particularly at the flagellar pores and at the distal flagellar tips. Localizes to the basal bodies.</text>
</comment>